<accession>Q6A6C0</accession>
<name>PURL_CUTAK</name>
<gene>
    <name evidence="1" type="primary">purL</name>
    <name type="ordered locus">PPA1977</name>
</gene>
<organism>
    <name type="scientific">Cutibacterium acnes (strain DSM 16379 / KPA171202)</name>
    <name type="common">Propionibacterium acnes</name>
    <dbReference type="NCBI Taxonomy" id="267747"/>
    <lineage>
        <taxon>Bacteria</taxon>
        <taxon>Bacillati</taxon>
        <taxon>Actinomycetota</taxon>
        <taxon>Actinomycetes</taxon>
        <taxon>Propionibacteriales</taxon>
        <taxon>Propionibacteriaceae</taxon>
        <taxon>Cutibacterium</taxon>
    </lineage>
</organism>
<dbReference type="EC" id="6.3.5.3" evidence="1"/>
<dbReference type="EMBL" id="AE017283">
    <property type="protein sequence ID" value="AAT83693.1"/>
    <property type="molecule type" value="Genomic_DNA"/>
</dbReference>
<dbReference type="RefSeq" id="WP_002526377.1">
    <property type="nucleotide sequence ID" value="NZ_CP025935.1"/>
</dbReference>
<dbReference type="SMR" id="Q6A6C0"/>
<dbReference type="EnsemblBacteria" id="AAT83693">
    <property type="protein sequence ID" value="AAT83693"/>
    <property type="gene ID" value="PPA1977"/>
</dbReference>
<dbReference type="KEGG" id="pac:PPA1977"/>
<dbReference type="PATRIC" id="fig|267747.3.peg.2027"/>
<dbReference type="eggNOG" id="COG0046">
    <property type="taxonomic scope" value="Bacteria"/>
</dbReference>
<dbReference type="HOGENOM" id="CLU_003100_0_1_11"/>
<dbReference type="UniPathway" id="UPA00074">
    <property type="reaction ID" value="UER00128"/>
</dbReference>
<dbReference type="Proteomes" id="UP000000603">
    <property type="component" value="Chromosome"/>
</dbReference>
<dbReference type="GO" id="GO:0005737">
    <property type="term" value="C:cytoplasm"/>
    <property type="evidence" value="ECO:0007669"/>
    <property type="project" value="UniProtKB-SubCell"/>
</dbReference>
<dbReference type="GO" id="GO:0005524">
    <property type="term" value="F:ATP binding"/>
    <property type="evidence" value="ECO:0007669"/>
    <property type="project" value="UniProtKB-UniRule"/>
</dbReference>
<dbReference type="GO" id="GO:0000287">
    <property type="term" value="F:magnesium ion binding"/>
    <property type="evidence" value="ECO:0007669"/>
    <property type="project" value="UniProtKB-UniRule"/>
</dbReference>
<dbReference type="GO" id="GO:0004642">
    <property type="term" value="F:phosphoribosylformylglycinamidine synthase activity"/>
    <property type="evidence" value="ECO:0007669"/>
    <property type="project" value="UniProtKB-UniRule"/>
</dbReference>
<dbReference type="GO" id="GO:0006189">
    <property type="term" value="P:'de novo' IMP biosynthetic process"/>
    <property type="evidence" value="ECO:0007669"/>
    <property type="project" value="UniProtKB-UniRule"/>
</dbReference>
<dbReference type="CDD" id="cd02203">
    <property type="entry name" value="PurL_repeat1"/>
    <property type="match status" value="1"/>
</dbReference>
<dbReference type="CDD" id="cd02204">
    <property type="entry name" value="PurL_repeat2"/>
    <property type="match status" value="1"/>
</dbReference>
<dbReference type="FunFam" id="3.30.1330.10:FF:000004">
    <property type="entry name" value="Phosphoribosylformylglycinamidine synthase subunit PurL"/>
    <property type="match status" value="1"/>
</dbReference>
<dbReference type="Gene3D" id="3.90.650.10">
    <property type="entry name" value="PurM-like C-terminal domain"/>
    <property type="match status" value="2"/>
</dbReference>
<dbReference type="Gene3D" id="3.30.1330.10">
    <property type="entry name" value="PurM-like, N-terminal domain"/>
    <property type="match status" value="2"/>
</dbReference>
<dbReference type="HAMAP" id="MF_00420">
    <property type="entry name" value="PurL_2"/>
    <property type="match status" value="1"/>
</dbReference>
<dbReference type="InterPro" id="IPR010074">
    <property type="entry name" value="PRibForGlyAmidine_synth_PurL"/>
</dbReference>
<dbReference type="InterPro" id="IPR041609">
    <property type="entry name" value="PurL_linker"/>
</dbReference>
<dbReference type="InterPro" id="IPR010918">
    <property type="entry name" value="PurM-like_C_dom"/>
</dbReference>
<dbReference type="InterPro" id="IPR036676">
    <property type="entry name" value="PurM-like_C_sf"/>
</dbReference>
<dbReference type="InterPro" id="IPR016188">
    <property type="entry name" value="PurM-like_N"/>
</dbReference>
<dbReference type="InterPro" id="IPR036921">
    <property type="entry name" value="PurM-like_N_sf"/>
</dbReference>
<dbReference type="NCBIfam" id="TIGR01736">
    <property type="entry name" value="FGAM_synth_II"/>
    <property type="match status" value="1"/>
</dbReference>
<dbReference type="NCBIfam" id="NF002290">
    <property type="entry name" value="PRK01213.1"/>
    <property type="match status" value="1"/>
</dbReference>
<dbReference type="PANTHER" id="PTHR43555">
    <property type="entry name" value="PHOSPHORIBOSYLFORMYLGLYCINAMIDINE SYNTHASE SUBUNIT PURL"/>
    <property type="match status" value="1"/>
</dbReference>
<dbReference type="PANTHER" id="PTHR43555:SF1">
    <property type="entry name" value="PHOSPHORIBOSYLFORMYLGLYCINAMIDINE SYNTHASE SUBUNIT PURL"/>
    <property type="match status" value="1"/>
</dbReference>
<dbReference type="Pfam" id="PF00586">
    <property type="entry name" value="AIRS"/>
    <property type="match status" value="2"/>
</dbReference>
<dbReference type="Pfam" id="PF02769">
    <property type="entry name" value="AIRS_C"/>
    <property type="match status" value="2"/>
</dbReference>
<dbReference type="Pfam" id="PF18072">
    <property type="entry name" value="FGAR-AT_linker"/>
    <property type="match status" value="1"/>
</dbReference>
<dbReference type="PIRSF" id="PIRSF001587">
    <property type="entry name" value="FGAM_synthase_II"/>
    <property type="match status" value="1"/>
</dbReference>
<dbReference type="SUPFAM" id="SSF56042">
    <property type="entry name" value="PurM C-terminal domain-like"/>
    <property type="match status" value="2"/>
</dbReference>
<dbReference type="SUPFAM" id="SSF55326">
    <property type="entry name" value="PurM N-terminal domain-like"/>
    <property type="match status" value="2"/>
</dbReference>
<protein>
    <recommendedName>
        <fullName evidence="1">Phosphoribosylformylglycinamidine synthase subunit PurL</fullName>
        <shortName evidence="1">FGAM synthase</shortName>
        <ecNumber evidence="1">6.3.5.3</ecNumber>
    </recommendedName>
    <alternativeName>
        <fullName evidence="1">Formylglycinamide ribonucleotide amidotransferase subunit II</fullName>
        <shortName evidence="1">FGAR amidotransferase II</shortName>
        <shortName evidence="1">FGAR-AT II</shortName>
    </alternativeName>
    <alternativeName>
        <fullName evidence="1">Glutamine amidotransferase PurL</fullName>
    </alternativeName>
    <alternativeName>
        <fullName evidence="1">Phosphoribosylformylglycinamidine synthase subunit II</fullName>
    </alternativeName>
</protein>
<sequence length="750" mass="79364">MADTVENAVSTPDVEQPWAELGLSADEYQRIREILGRRPTGGELAMYSVMWSEHCSYKSSKKYLRRFGDLPQQTPLGPLLAGIGDNAGVVDIGNGLAVTFKAESHNHPSYVEPHQGAATGVGGIVRDIMAMGARPVGVMNALAFGPLDAPDTARVLPGVVSGIADYGNCLGLPTIGGQTLFDPTYYGNPLVNALCVGVLRHEDLQFAKASGVGNLVVLFGAATGGDGIGGASILASESFAAEGESKRPSVQVGDPFMEKLLIECTLDLFNAGVVEALQDFGAAGISCATSELASAGDGGMHVELDRVPLRDPNLAPEEILMSESQERMAAVVRPDQLDRFMEICAHWGVAATVIGEVTDTGRLHIDWQGERIVDVDPRTVAHDGPVLDMPAARPWWIDELNEDDANALPRDNSGEGLAGALLALVGSAQLCDRSWITDQYDRFVRGNTVLAQPNDAGMIRIDDNLGIALSLDANGRQTTLNPYLGAQLALCEAYRNVAVSGATPVAVTDCLNYGSPYDPDVMWQFDETILGLVDGCRELGVPVTGGNVSLHNRTGDESIRPTPLVGVLGVIDDVHRRIPSAFAHDGDAVLLLGTTKCEFGGSVYEDVIHAGHLGGMPPMPDLNAEKALAAVMVEASKRGLLSSAHDLSDGGLAQALVESCLQGGLGVSVSLPEGEPSVMLFSETPARAIVSLCGNGYREFKELCQEHGVPTARIGEVIDHGEIEVNGLFSLPLDEIERAWRKPIPTAMGE</sequence>
<feature type="chain" id="PRO_0000100476" description="Phosphoribosylformylglycinamidine synthase subunit PurL">
    <location>
        <begin position="1"/>
        <end position="750"/>
    </location>
</feature>
<feature type="active site" evidence="1">
    <location>
        <position position="54"/>
    </location>
</feature>
<feature type="active site" description="Proton acceptor" evidence="1">
    <location>
        <position position="105"/>
    </location>
</feature>
<feature type="binding site" evidence="1">
    <location>
        <position position="57"/>
    </location>
    <ligand>
        <name>ATP</name>
        <dbReference type="ChEBI" id="CHEBI:30616"/>
    </ligand>
</feature>
<feature type="binding site" evidence="1">
    <location>
        <position position="101"/>
    </location>
    <ligand>
        <name>ATP</name>
        <dbReference type="ChEBI" id="CHEBI:30616"/>
    </ligand>
</feature>
<feature type="binding site" evidence="1">
    <location>
        <position position="103"/>
    </location>
    <ligand>
        <name>Mg(2+)</name>
        <dbReference type="ChEBI" id="CHEBI:18420"/>
        <label>1</label>
    </ligand>
</feature>
<feature type="binding site" evidence="1">
    <location>
        <begin position="104"/>
        <end position="107"/>
    </location>
    <ligand>
        <name>substrate</name>
    </ligand>
</feature>
<feature type="binding site" evidence="1">
    <location>
        <position position="126"/>
    </location>
    <ligand>
        <name>substrate</name>
    </ligand>
</feature>
<feature type="binding site" evidence="1">
    <location>
        <position position="127"/>
    </location>
    <ligand>
        <name>Mg(2+)</name>
        <dbReference type="ChEBI" id="CHEBI:18420"/>
        <label>2</label>
    </ligand>
</feature>
<feature type="binding site" evidence="1">
    <location>
        <position position="251"/>
    </location>
    <ligand>
        <name>substrate</name>
    </ligand>
</feature>
<feature type="binding site" evidence="1">
    <location>
        <position position="279"/>
    </location>
    <ligand>
        <name>Mg(2+)</name>
        <dbReference type="ChEBI" id="CHEBI:18420"/>
        <label>2</label>
    </ligand>
</feature>
<feature type="binding site" evidence="1">
    <location>
        <begin position="323"/>
        <end position="325"/>
    </location>
    <ligand>
        <name>substrate</name>
    </ligand>
</feature>
<feature type="binding site" evidence="1">
    <location>
        <position position="509"/>
    </location>
    <ligand>
        <name>ATP</name>
        <dbReference type="ChEBI" id="CHEBI:30616"/>
    </ligand>
</feature>
<feature type="binding site" evidence="1">
    <location>
        <position position="546"/>
    </location>
    <ligand>
        <name>ATP</name>
        <dbReference type="ChEBI" id="CHEBI:30616"/>
    </ligand>
</feature>
<feature type="binding site" evidence="1">
    <location>
        <position position="547"/>
    </location>
    <ligand>
        <name>Mg(2+)</name>
        <dbReference type="ChEBI" id="CHEBI:18420"/>
        <label>1</label>
    </ligand>
</feature>
<feature type="binding site" evidence="1">
    <location>
        <position position="549"/>
    </location>
    <ligand>
        <name>substrate</name>
    </ligand>
</feature>
<comment type="function">
    <text evidence="1">Part of the phosphoribosylformylglycinamidine synthase complex involved in the purines biosynthetic pathway. Catalyzes the ATP-dependent conversion of formylglycinamide ribonucleotide (FGAR) and glutamine to yield formylglycinamidine ribonucleotide (FGAM) and glutamate. The FGAM synthase complex is composed of three subunits. PurQ produces an ammonia molecule by converting glutamine to glutamate. PurL transfers the ammonia molecule to FGAR to form FGAM in an ATP-dependent manner. PurS interacts with PurQ and PurL and is thought to assist in the transfer of the ammonia molecule from PurQ to PurL.</text>
</comment>
<comment type="catalytic activity">
    <reaction evidence="1">
        <text>N(2)-formyl-N(1)-(5-phospho-beta-D-ribosyl)glycinamide + L-glutamine + ATP + H2O = 2-formamido-N(1)-(5-O-phospho-beta-D-ribosyl)acetamidine + L-glutamate + ADP + phosphate + H(+)</text>
        <dbReference type="Rhea" id="RHEA:17129"/>
        <dbReference type="ChEBI" id="CHEBI:15377"/>
        <dbReference type="ChEBI" id="CHEBI:15378"/>
        <dbReference type="ChEBI" id="CHEBI:29985"/>
        <dbReference type="ChEBI" id="CHEBI:30616"/>
        <dbReference type="ChEBI" id="CHEBI:43474"/>
        <dbReference type="ChEBI" id="CHEBI:58359"/>
        <dbReference type="ChEBI" id="CHEBI:147286"/>
        <dbReference type="ChEBI" id="CHEBI:147287"/>
        <dbReference type="ChEBI" id="CHEBI:456216"/>
        <dbReference type="EC" id="6.3.5.3"/>
    </reaction>
</comment>
<comment type="pathway">
    <text evidence="1">Purine metabolism; IMP biosynthesis via de novo pathway; 5-amino-1-(5-phospho-D-ribosyl)imidazole from N(2)-formyl-N(1)-(5-phospho-D-ribosyl)glycinamide: step 1/2.</text>
</comment>
<comment type="subunit">
    <text evidence="1">Monomer. Part of the FGAM synthase complex composed of 1 PurL, 1 PurQ and 2 PurS subunits.</text>
</comment>
<comment type="subcellular location">
    <subcellularLocation>
        <location evidence="1">Cytoplasm</location>
    </subcellularLocation>
</comment>
<comment type="similarity">
    <text evidence="1">Belongs to the FGAMS family.</text>
</comment>
<reference key="1">
    <citation type="journal article" date="2004" name="Science">
        <title>The complete genome sequence of Propionibacterium acnes, a commensal of human skin.</title>
        <authorList>
            <person name="Brueggemann H."/>
            <person name="Henne A."/>
            <person name="Hoster F."/>
            <person name="Liesegang H."/>
            <person name="Wiezer A."/>
            <person name="Strittmatter A."/>
            <person name="Hujer S."/>
            <person name="Duerre P."/>
            <person name="Gottschalk G."/>
        </authorList>
    </citation>
    <scope>NUCLEOTIDE SEQUENCE [LARGE SCALE GENOMIC DNA]</scope>
    <source>
        <strain>DSM 16379 / KPA171202</strain>
    </source>
</reference>
<keyword id="KW-0067">ATP-binding</keyword>
<keyword id="KW-0963">Cytoplasm</keyword>
<keyword id="KW-0436">Ligase</keyword>
<keyword id="KW-0460">Magnesium</keyword>
<keyword id="KW-0479">Metal-binding</keyword>
<keyword id="KW-0547">Nucleotide-binding</keyword>
<keyword id="KW-0658">Purine biosynthesis</keyword>
<evidence type="ECO:0000255" key="1">
    <source>
        <dbReference type="HAMAP-Rule" id="MF_00420"/>
    </source>
</evidence>
<proteinExistence type="inferred from homology"/>